<reference key="1">
    <citation type="journal article" date="2005" name="Science">
        <title>The transcriptional landscape of the mammalian genome.</title>
        <authorList>
            <person name="Carninci P."/>
            <person name="Kasukawa T."/>
            <person name="Katayama S."/>
            <person name="Gough J."/>
            <person name="Frith M.C."/>
            <person name="Maeda N."/>
            <person name="Oyama R."/>
            <person name="Ravasi T."/>
            <person name="Lenhard B."/>
            <person name="Wells C."/>
            <person name="Kodzius R."/>
            <person name="Shimokawa K."/>
            <person name="Bajic V.B."/>
            <person name="Brenner S.E."/>
            <person name="Batalov S."/>
            <person name="Forrest A.R."/>
            <person name="Zavolan M."/>
            <person name="Davis M.J."/>
            <person name="Wilming L.G."/>
            <person name="Aidinis V."/>
            <person name="Allen J.E."/>
            <person name="Ambesi-Impiombato A."/>
            <person name="Apweiler R."/>
            <person name="Aturaliya R.N."/>
            <person name="Bailey T.L."/>
            <person name="Bansal M."/>
            <person name="Baxter L."/>
            <person name="Beisel K.W."/>
            <person name="Bersano T."/>
            <person name="Bono H."/>
            <person name="Chalk A.M."/>
            <person name="Chiu K.P."/>
            <person name="Choudhary V."/>
            <person name="Christoffels A."/>
            <person name="Clutterbuck D.R."/>
            <person name="Crowe M.L."/>
            <person name="Dalla E."/>
            <person name="Dalrymple B.P."/>
            <person name="de Bono B."/>
            <person name="Della Gatta G."/>
            <person name="di Bernardo D."/>
            <person name="Down T."/>
            <person name="Engstrom P."/>
            <person name="Fagiolini M."/>
            <person name="Faulkner G."/>
            <person name="Fletcher C.F."/>
            <person name="Fukushima T."/>
            <person name="Furuno M."/>
            <person name="Futaki S."/>
            <person name="Gariboldi M."/>
            <person name="Georgii-Hemming P."/>
            <person name="Gingeras T.R."/>
            <person name="Gojobori T."/>
            <person name="Green R.E."/>
            <person name="Gustincich S."/>
            <person name="Harbers M."/>
            <person name="Hayashi Y."/>
            <person name="Hensch T.K."/>
            <person name="Hirokawa N."/>
            <person name="Hill D."/>
            <person name="Huminiecki L."/>
            <person name="Iacono M."/>
            <person name="Ikeo K."/>
            <person name="Iwama A."/>
            <person name="Ishikawa T."/>
            <person name="Jakt M."/>
            <person name="Kanapin A."/>
            <person name="Katoh M."/>
            <person name="Kawasawa Y."/>
            <person name="Kelso J."/>
            <person name="Kitamura H."/>
            <person name="Kitano H."/>
            <person name="Kollias G."/>
            <person name="Krishnan S.P."/>
            <person name="Kruger A."/>
            <person name="Kummerfeld S.K."/>
            <person name="Kurochkin I.V."/>
            <person name="Lareau L.F."/>
            <person name="Lazarevic D."/>
            <person name="Lipovich L."/>
            <person name="Liu J."/>
            <person name="Liuni S."/>
            <person name="McWilliam S."/>
            <person name="Madan Babu M."/>
            <person name="Madera M."/>
            <person name="Marchionni L."/>
            <person name="Matsuda H."/>
            <person name="Matsuzawa S."/>
            <person name="Miki H."/>
            <person name="Mignone F."/>
            <person name="Miyake S."/>
            <person name="Morris K."/>
            <person name="Mottagui-Tabar S."/>
            <person name="Mulder N."/>
            <person name="Nakano N."/>
            <person name="Nakauchi H."/>
            <person name="Ng P."/>
            <person name="Nilsson R."/>
            <person name="Nishiguchi S."/>
            <person name="Nishikawa S."/>
            <person name="Nori F."/>
            <person name="Ohara O."/>
            <person name="Okazaki Y."/>
            <person name="Orlando V."/>
            <person name="Pang K.C."/>
            <person name="Pavan W.J."/>
            <person name="Pavesi G."/>
            <person name="Pesole G."/>
            <person name="Petrovsky N."/>
            <person name="Piazza S."/>
            <person name="Reed J."/>
            <person name="Reid J.F."/>
            <person name="Ring B.Z."/>
            <person name="Ringwald M."/>
            <person name="Rost B."/>
            <person name="Ruan Y."/>
            <person name="Salzberg S.L."/>
            <person name="Sandelin A."/>
            <person name="Schneider C."/>
            <person name="Schoenbach C."/>
            <person name="Sekiguchi K."/>
            <person name="Semple C.A."/>
            <person name="Seno S."/>
            <person name="Sessa L."/>
            <person name="Sheng Y."/>
            <person name="Shibata Y."/>
            <person name="Shimada H."/>
            <person name="Shimada K."/>
            <person name="Silva D."/>
            <person name="Sinclair B."/>
            <person name="Sperling S."/>
            <person name="Stupka E."/>
            <person name="Sugiura K."/>
            <person name="Sultana R."/>
            <person name="Takenaka Y."/>
            <person name="Taki K."/>
            <person name="Tammoja K."/>
            <person name="Tan S.L."/>
            <person name="Tang S."/>
            <person name="Taylor M.S."/>
            <person name="Tegner J."/>
            <person name="Teichmann S.A."/>
            <person name="Ueda H.R."/>
            <person name="van Nimwegen E."/>
            <person name="Verardo R."/>
            <person name="Wei C.L."/>
            <person name="Yagi K."/>
            <person name="Yamanishi H."/>
            <person name="Zabarovsky E."/>
            <person name="Zhu S."/>
            <person name="Zimmer A."/>
            <person name="Hide W."/>
            <person name="Bult C."/>
            <person name="Grimmond S.M."/>
            <person name="Teasdale R.D."/>
            <person name="Liu E.T."/>
            <person name="Brusic V."/>
            <person name="Quackenbush J."/>
            <person name="Wahlestedt C."/>
            <person name="Mattick J.S."/>
            <person name="Hume D.A."/>
            <person name="Kai C."/>
            <person name="Sasaki D."/>
            <person name="Tomaru Y."/>
            <person name="Fukuda S."/>
            <person name="Kanamori-Katayama M."/>
            <person name="Suzuki M."/>
            <person name="Aoki J."/>
            <person name="Arakawa T."/>
            <person name="Iida J."/>
            <person name="Imamura K."/>
            <person name="Itoh M."/>
            <person name="Kato T."/>
            <person name="Kawaji H."/>
            <person name="Kawagashira N."/>
            <person name="Kawashima T."/>
            <person name="Kojima M."/>
            <person name="Kondo S."/>
            <person name="Konno H."/>
            <person name="Nakano K."/>
            <person name="Ninomiya N."/>
            <person name="Nishio T."/>
            <person name="Okada M."/>
            <person name="Plessy C."/>
            <person name="Shibata K."/>
            <person name="Shiraki T."/>
            <person name="Suzuki S."/>
            <person name="Tagami M."/>
            <person name="Waki K."/>
            <person name="Watahiki A."/>
            <person name="Okamura-Oho Y."/>
            <person name="Suzuki H."/>
            <person name="Kawai J."/>
            <person name="Hayashizaki Y."/>
        </authorList>
    </citation>
    <scope>NUCLEOTIDE SEQUENCE [LARGE SCALE MRNA]</scope>
    <source>
        <strain>C57BL/6J</strain>
        <tissue>Testis</tissue>
    </source>
</reference>
<reference key="2">
    <citation type="journal article" date="2005" name="J. Biol. Chem.">
        <title>PDILT, a divergent testis-specific protein disulfide isomerase with a non-classical SXXC motif that engages in disulfide-dependent interactions in the endoplasmic reticulum.</title>
        <authorList>
            <person name="van Lith M."/>
            <person name="Hartigan N."/>
            <person name="Hatch J."/>
            <person name="Benham A.M."/>
        </authorList>
    </citation>
    <scope>TISSUE SPECIFICITY</scope>
</reference>
<reference key="3">
    <citation type="journal article" date="2007" name="Mol. Biol. Cell">
        <title>A developmentally regulated chaperone complex for the endoplasmic reticulum of male haploid germ cells.</title>
        <authorList>
            <person name="van Lith M."/>
            <person name="Karala A.R."/>
            <person name="Bown D."/>
            <person name="Gatehouse J.A."/>
            <person name="Ruddock L.W."/>
            <person name="Saunders P.T.K."/>
            <person name="Benham A.M."/>
        </authorList>
    </citation>
    <scope>TISSUE SPECIFICITY</scope>
</reference>
<reference key="4">
    <citation type="journal article" date="2010" name="Cell">
        <title>A tissue-specific atlas of mouse protein phosphorylation and expression.</title>
        <authorList>
            <person name="Huttlin E.L."/>
            <person name="Jedrychowski M.P."/>
            <person name="Elias J.E."/>
            <person name="Goswami T."/>
            <person name="Rad R."/>
            <person name="Beausoleil S.A."/>
            <person name="Villen J."/>
            <person name="Haas W."/>
            <person name="Sowa M.E."/>
            <person name="Gygi S.P."/>
        </authorList>
    </citation>
    <scope>IDENTIFICATION BY MASS SPECTROMETRY [LARGE SCALE ANALYSIS]</scope>
    <source>
        <tissue>Testis</tissue>
    </source>
</reference>
<evidence type="ECO:0000250" key="1"/>
<evidence type="ECO:0000255" key="2"/>
<evidence type="ECO:0000255" key="3">
    <source>
        <dbReference type="PROSITE-ProRule" id="PRU00691"/>
    </source>
</evidence>
<evidence type="ECO:0000255" key="4">
    <source>
        <dbReference type="PROSITE-ProRule" id="PRU10138"/>
    </source>
</evidence>
<evidence type="ECO:0000256" key="5">
    <source>
        <dbReference type="SAM" id="MobiDB-lite"/>
    </source>
</evidence>
<evidence type="ECO:0000269" key="6">
    <source>
    </source>
</evidence>
<evidence type="ECO:0000269" key="7">
    <source>
    </source>
</evidence>
<evidence type="ECO:0000305" key="8"/>
<feature type="signal peptide" evidence="2">
    <location>
        <begin position="1"/>
        <end position="20"/>
    </location>
</feature>
<feature type="chain" id="PRO_0000325851" description="Protein disulfide-isomerase-like protein of the testis">
    <location>
        <begin position="21"/>
        <end position="588"/>
    </location>
</feature>
<feature type="domain" description="Thioredoxin" evidence="3">
    <location>
        <begin position="385"/>
        <end position="448"/>
    </location>
</feature>
<feature type="region of interest" description="Disordered" evidence="5">
    <location>
        <begin position="531"/>
        <end position="588"/>
    </location>
</feature>
<feature type="short sequence motif" description="Prevents secretion from ER" evidence="4">
    <location>
        <begin position="585"/>
        <end position="588"/>
    </location>
</feature>
<feature type="compositionally biased region" description="Basic and acidic residues" evidence="5">
    <location>
        <begin position="531"/>
        <end position="542"/>
    </location>
</feature>
<feature type="compositionally biased region" description="Basic and acidic residues" evidence="5">
    <location>
        <begin position="549"/>
        <end position="567"/>
    </location>
</feature>
<feature type="compositionally biased region" description="Basic and acidic residues" evidence="5">
    <location>
        <begin position="574"/>
        <end position="588"/>
    </location>
</feature>
<feature type="glycosylation site" description="N-linked (GlcNAc...) asparagine" evidence="2">
    <location>
        <position position="55"/>
    </location>
</feature>
<feature type="glycosylation site" description="N-linked (GlcNAc...) asparagine" evidence="2">
    <location>
        <position position="157"/>
    </location>
</feature>
<feature type="glycosylation site" description="N-linked (GlcNAc...) asparagine" evidence="2">
    <location>
        <position position="337"/>
    </location>
</feature>
<protein>
    <recommendedName>
        <fullName>Protein disulfide-isomerase-like protein of the testis</fullName>
    </recommendedName>
</protein>
<accession>Q9DAN1</accession>
<sequence>MELLWTPLLLVAACLSEVLGSPEIDTGINISQPLHILEDHNLMVLTPAGLTQTLNETRFLMVIFHNPSLKQSRKLAKELGKAAEIFGKGKNGLGFGKVDITKETELQQEFDITHAPELKLFFEGNRLKPISCKDVVESTALVVWLRRQISKKALLFNNSDEVADFVKSRPLVIVGFFQDLEEEVAELFYDTIKDFPELTFGAIQIKNSFGRFHVILDSVLVFKKGKIVKRQELINDSTNKDHLNQVIKQQLTGFVIELNPENKDLIYELNILNHMLLFISKSSEPYSTISRHYRQIAKEFQNKILFVLVNADEPKNKRIFEYFQISRVNVPSVQILNLSSDGRYKMPTDDINFESLKKFCNSFLSKTAKKHKASEEIPKYWDQGPVKKLVGKNFNVVVLDKEKDVFVMFYAPWSEKCRVLLPLLEELGIKYQNHSTVIIAKIDITANDIQLANPEQYPFFRLFPTDSQEAVMYKGEHTMKGFCDFLESHVKVRIEEEDELLYIEQNEEEEVLAEPEIQLIEKLPENPLLKIEDTSKQDRPVKESPVLDSIRKPEEPERRKETAEREAAAAQPKEQPKPERKLEVKEEL</sequence>
<gene>
    <name type="primary">Pdilt</name>
</gene>
<organism>
    <name type="scientific">Mus musculus</name>
    <name type="common">Mouse</name>
    <dbReference type="NCBI Taxonomy" id="10090"/>
    <lineage>
        <taxon>Eukaryota</taxon>
        <taxon>Metazoa</taxon>
        <taxon>Chordata</taxon>
        <taxon>Craniata</taxon>
        <taxon>Vertebrata</taxon>
        <taxon>Euteleostomi</taxon>
        <taxon>Mammalia</taxon>
        <taxon>Eutheria</taxon>
        <taxon>Euarchontoglires</taxon>
        <taxon>Glires</taxon>
        <taxon>Rodentia</taxon>
        <taxon>Myomorpha</taxon>
        <taxon>Muroidea</taxon>
        <taxon>Muridae</taxon>
        <taxon>Murinae</taxon>
        <taxon>Mus</taxon>
        <taxon>Mus</taxon>
    </lineage>
</organism>
<comment type="function">
    <text evidence="1">Probable redox-inactive chaperone involved in spermatogenesis.</text>
</comment>
<comment type="subunit">
    <text evidence="1">Homodimer. The homodimer is not disulfide-linked. Interacts with CLGN and ERO1A (By similarity).</text>
</comment>
<comment type="interaction">
    <interactant intactId="EBI-15971896">
        <id>Q9DAN1</id>
    </interactant>
    <interactant intactId="EBI-15971963">
        <id>Q62287</id>
        <label>Adam3</label>
    </interactant>
    <organismsDiffer>false</organismsDiffer>
    <experiments>2</experiments>
</comment>
<comment type="subcellular location">
    <subcellularLocation>
        <location evidence="4">Endoplasmic reticulum</location>
    </subcellularLocation>
</comment>
<comment type="tissue specificity">
    <text evidence="6 7">Testis-specific (at protein level).</text>
</comment>
<comment type="domain">
    <text>The thioredoxin domain lacks the conserved redox-active Cys at position 414 which is replaced by a Ser residue, suggesting that it lacks thioredoxin activity.</text>
</comment>
<comment type="PTM">
    <text evidence="1">N-glycosylated.</text>
</comment>
<comment type="similarity">
    <text evidence="8">Belongs to the protein disulfide isomerase family.</text>
</comment>
<comment type="sequence caution" evidence="8">
    <conflict type="erroneous initiation">
        <sequence resource="EMBL-CDS" id="BAB24190"/>
    </conflict>
</comment>
<keyword id="KW-0143">Chaperone</keyword>
<keyword id="KW-0217">Developmental protein</keyword>
<keyword id="KW-0221">Differentiation</keyword>
<keyword id="KW-1015">Disulfide bond</keyword>
<keyword id="KW-0256">Endoplasmic reticulum</keyword>
<keyword id="KW-0325">Glycoprotein</keyword>
<keyword id="KW-0413">Isomerase</keyword>
<keyword id="KW-1185">Reference proteome</keyword>
<keyword id="KW-0732">Signal</keyword>
<keyword id="KW-0744">Spermatogenesis</keyword>
<dbReference type="EMBL" id="AK005692">
    <property type="protein sequence ID" value="BAB24190.1"/>
    <property type="status" value="ALT_INIT"/>
    <property type="molecule type" value="mRNA"/>
</dbReference>
<dbReference type="CCDS" id="CCDS52378.1"/>
<dbReference type="RefSeq" id="NP_082219.1">
    <property type="nucleotide sequence ID" value="NM_027943.1"/>
</dbReference>
<dbReference type="RefSeq" id="XP_006508276.2">
    <property type="nucleotide sequence ID" value="XM_006508213.3"/>
</dbReference>
<dbReference type="RefSeq" id="XP_006508277.1">
    <property type="nucleotide sequence ID" value="XM_006508214.3"/>
</dbReference>
<dbReference type="RefSeq" id="XP_030098854.1">
    <property type="nucleotide sequence ID" value="XM_030242994.1"/>
</dbReference>
<dbReference type="RefSeq" id="XP_030098855.1">
    <property type="nucleotide sequence ID" value="XM_030242995.1"/>
</dbReference>
<dbReference type="SMR" id="Q9DAN1"/>
<dbReference type="DIP" id="DIP-60024N"/>
<dbReference type="FunCoup" id="Q9DAN1">
    <property type="interactions" value="73"/>
</dbReference>
<dbReference type="IntAct" id="Q9DAN1">
    <property type="interactions" value="3"/>
</dbReference>
<dbReference type="STRING" id="10090.ENSMUSP00000033267"/>
<dbReference type="GlyCosmos" id="Q9DAN1">
    <property type="glycosylation" value="3 sites, No reported glycans"/>
</dbReference>
<dbReference type="GlyGen" id="Q9DAN1">
    <property type="glycosylation" value="5 sites, 2 N-linked glycans (3 sites)"/>
</dbReference>
<dbReference type="PhosphoSitePlus" id="Q9DAN1"/>
<dbReference type="SwissPalm" id="Q9DAN1"/>
<dbReference type="PaxDb" id="10090-ENSMUSP00000033267"/>
<dbReference type="PeptideAtlas" id="Q9DAN1"/>
<dbReference type="ProteomicsDB" id="288021"/>
<dbReference type="Antibodypedia" id="52595">
    <property type="antibodies" value="83 antibodies from 18 providers"/>
</dbReference>
<dbReference type="Ensembl" id="ENSMUST00000033267.4">
    <property type="protein sequence ID" value="ENSMUSP00000033267.3"/>
    <property type="gene ID" value="ENSMUSG00000030968.4"/>
</dbReference>
<dbReference type="GeneID" id="71830"/>
<dbReference type="KEGG" id="mmu:71830"/>
<dbReference type="UCSC" id="uc009jld.1">
    <property type="organism name" value="mouse"/>
</dbReference>
<dbReference type="AGR" id="MGI:1919080"/>
<dbReference type="CTD" id="204474"/>
<dbReference type="MGI" id="MGI:1919080">
    <property type="gene designation" value="Pdilt"/>
</dbReference>
<dbReference type="VEuPathDB" id="HostDB:ENSMUSG00000030968"/>
<dbReference type="eggNOG" id="KOG0190">
    <property type="taxonomic scope" value="Eukaryota"/>
</dbReference>
<dbReference type="GeneTree" id="ENSGT00940000160939"/>
<dbReference type="HOGENOM" id="CLU_025879_1_1_1"/>
<dbReference type="InParanoid" id="Q9DAN1"/>
<dbReference type="OMA" id="APWSKKC"/>
<dbReference type="OrthoDB" id="72053at2759"/>
<dbReference type="PhylomeDB" id="Q9DAN1"/>
<dbReference type="TreeFam" id="TF106381"/>
<dbReference type="BioGRID-ORCS" id="71830">
    <property type="hits" value="1 hit in 76 CRISPR screens"/>
</dbReference>
<dbReference type="ChiTaRS" id="Pdilt">
    <property type="organism name" value="mouse"/>
</dbReference>
<dbReference type="PRO" id="PR:Q9DAN1"/>
<dbReference type="Proteomes" id="UP000000589">
    <property type="component" value="Chromosome 7"/>
</dbReference>
<dbReference type="RNAct" id="Q9DAN1">
    <property type="molecule type" value="protein"/>
</dbReference>
<dbReference type="Bgee" id="ENSMUSG00000030968">
    <property type="expression patterns" value="Expressed in spermatid and 88 other cell types or tissues"/>
</dbReference>
<dbReference type="ExpressionAtlas" id="Q9DAN1">
    <property type="expression patterns" value="baseline and differential"/>
</dbReference>
<dbReference type="GO" id="GO:0005783">
    <property type="term" value="C:endoplasmic reticulum"/>
    <property type="evidence" value="ECO:0007669"/>
    <property type="project" value="UniProtKB-SubCell"/>
</dbReference>
<dbReference type="GO" id="GO:0003756">
    <property type="term" value="F:protein disulfide isomerase activity"/>
    <property type="evidence" value="ECO:0000315"/>
    <property type="project" value="MGI"/>
</dbReference>
<dbReference type="GO" id="GO:0008354">
    <property type="term" value="P:germ cell migration"/>
    <property type="evidence" value="ECO:0000315"/>
    <property type="project" value="MGI"/>
</dbReference>
<dbReference type="GO" id="GO:0007286">
    <property type="term" value="P:spermatid development"/>
    <property type="evidence" value="ECO:0000315"/>
    <property type="project" value="MGI"/>
</dbReference>
<dbReference type="CDD" id="cd02961">
    <property type="entry name" value="PDI_a_family"/>
    <property type="match status" value="1"/>
</dbReference>
<dbReference type="CDD" id="cd02995">
    <property type="entry name" value="PDI_a_PDI_a'_C"/>
    <property type="match status" value="1"/>
</dbReference>
<dbReference type="CDD" id="cd02982">
    <property type="entry name" value="PDI_b'_family"/>
    <property type="match status" value="1"/>
</dbReference>
<dbReference type="CDD" id="cd02981">
    <property type="entry name" value="PDI_b_family"/>
    <property type="match status" value="1"/>
</dbReference>
<dbReference type="FunFam" id="3.40.30.10:FF:000167">
    <property type="entry name" value="Protein disulfide isomerase like, testis expressed"/>
    <property type="match status" value="1"/>
</dbReference>
<dbReference type="FunFam" id="3.40.30.10:FF:000177">
    <property type="entry name" value="Protein disulfide isomerase like, testis expressed"/>
    <property type="match status" value="1"/>
</dbReference>
<dbReference type="FunFam" id="3.40.30.10:FF:000191">
    <property type="entry name" value="Protein disulfide isomerase like, testis expressed"/>
    <property type="match status" value="1"/>
</dbReference>
<dbReference type="FunFam" id="3.40.30.10:FF:000209">
    <property type="entry name" value="Protein disulfide isomerase like, testis expressed"/>
    <property type="match status" value="1"/>
</dbReference>
<dbReference type="Gene3D" id="3.40.30.10">
    <property type="entry name" value="Glutaredoxin"/>
    <property type="match status" value="4"/>
</dbReference>
<dbReference type="InterPro" id="IPR036249">
    <property type="entry name" value="Thioredoxin-like_sf"/>
</dbReference>
<dbReference type="InterPro" id="IPR013766">
    <property type="entry name" value="Thioredoxin_domain"/>
</dbReference>
<dbReference type="PANTHER" id="PTHR18929">
    <property type="entry name" value="PROTEIN DISULFIDE ISOMERASE"/>
    <property type="match status" value="1"/>
</dbReference>
<dbReference type="PANTHER" id="PTHR18929:SF58">
    <property type="entry name" value="PROTEIN DISULFIDE-ISOMERASE-LIKE PROTEIN OF THE TESTIS"/>
    <property type="match status" value="1"/>
</dbReference>
<dbReference type="Pfam" id="PF00085">
    <property type="entry name" value="Thioredoxin"/>
    <property type="match status" value="1"/>
</dbReference>
<dbReference type="Pfam" id="PF13848">
    <property type="entry name" value="Thioredoxin_6"/>
    <property type="match status" value="1"/>
</dbReference>
<dbReference type="SUPFAM" id="SSF52833">
    <property type="entry name" value="Thioredoxin-like"/>
    <property type="match status" value="4"/>
</dbReference>
<dbReference type="PROSITE" id="PS00014">
    <property type="entry name" value="ER_TARGET"/>
    <property type="match status" value="1"/>
</dbReference>
<dbReference type="PROSITE" id="PS51352">
    <property type="entry name" value="THIOREDOXIN_2"/>
    <property type="match status" value="1"/>
</dbReference>
<proteinExistence type="evidence at protein level"/>
<name>PDILT_MOUSE</name>